<protein>
    <recommendedName>
        <fullName evidence="1">Pyridoxine 5'-phosphate synthase</fullName>
        <shortName evidence="1">PNP synthase</shortName>
        <ecNumber evidence="1">2.6.99.2</ecNumber>
    </recommendedName>
</protein>
<reference key="1">
    <citation type="journal article" date="2004" name="Nat. Genet.">
        <title>Evidence in the Legionella pneumophila genome for exploitation of host cell functions and high genome plasticity.</title>
        <authorList>
            <person name="Cazalet C."/>
            <person name="Rusniok C."/>
            <person name="Brueggemann H."/>
            <person name="Zidane N."/>
            <person name="Magnier A."/>
            <person name="Ma L."/>
            <person name="Tichit M."/>
            <person name="Jarraud S."/>
            <person name="Bouchier C."/>
            <person name="Vandenesch F."/>
            <person name="Kunst F."/>
            <person name="Etienne J."/>
            <person name="Glaser P."/>
            <person name="Buchrieser C."/>
        </authorList>
    </citation>
    <scope>NUCLEOTIDE SEQUENCE [LARGE SCALE GENOMIC DNA]</scope>
    <source>
        <strain>Lens</strain>
    </source>
</reference>
<comment type="function">
    <text evidence="1">Catalyzes the complicated ring closure reaction between the two acyclic compounds 1-deoxy-D-xylulose-5-phosphate (DXP) and 3-amino-2-oxopropyl phosphate (1-amino-acetone-3-phosphate or AAP) to form pyridoxine 5'-phosphate (PNP) and inorganic phosphate.</text>
</comment>
<comment type="catalytic activity">
    <reaction evidence="1">
        <text>3-amino-2-oxopropyl phosphate + 1-deoxy-D-xylulose 5-phosphate = pyridoxine 5'-phosphate + phosphate + 2 H2O + H(+)</text>
        <dbReference type="Rhea" id="RHEA:15265"/>
        <dbReference type="ChEBI" id="CHEBI:15377"/>
        <dbReference type="ChEBI" id="CHEBI:15378"/>
        <dbReference type="ChEBI" id="CHEBI:43474"/>
        <dbReference type="ChEBI" id="CHEBI:57279"/>
        <dbReference type="ChEBI" id="CHEBI:57792"/>
        <dbReference type="ChEBI" id="CHEBI:58589"/>
        <dbReference type="EC" id="2.6.99.2"/>
    </reaction>
</comment>
<comment type="pathway">
    <text evidence="1">Cofactor biosynthesis; pyridoxine 5'-phosphate biosynthesis; pyridoxine 5'-phosphate from D-erythrose 4-phosphate: step 5/5.</text>
</comment>
<comment type="subunit">
    <text evidence="1">Homooctamer; tetramer of dimers.</text>
</comment>
<comment type="subcellular location">
    <subcellularLocation>
        <location evidence="1">Cytoplasm</location>
    </subcellularLocation>
</comment>
<comment type="similarity">
    <text evidence="1">Belongs to the PNP synthase family.</text>
</comment>
<gene>
    <name evidence="1" type="primary">pdxJ</name>
    <name type="ordered locus">lpl0975</name>
</gene>
<organism>
    <name type="scientific">Legionella pneumophila (strain Lens)</name>
    <dbReference type="NCBI Taxonomy" id="297245"/>
    <lineage>
        <taxon>Bacteria</taxon>
        <taxon>Pseudomonadati</taxon>
        <taxon>Pseudomonadota</taxon>
        <taxon>Gammaproteobacteria</taxon>
        <taxon>Legionellales</taxon>
        <taxon>Legionellaceae</taxon>
        <taxon>Legionella</taxon>
    </lineage>
</organism>
<accession>Q3V7F6</accession>
<feature type="chain" id="PRO_0000231814" description="Pyridoxine 5'-phosphate synthase">
    <location>
        <begin position="1"/>
        <end position="248"/>
    </location>
</feature>
<feature type="active site" description="Proton acceptor" evidence="1">
    <location>
        <position position="46"/>
    </location>
</feature>
<feature type="active site" description="Proton acceptor" evidence="1">
    <location>
        <position position="73"/>
    </location>
</feature>
<feature type="active site" description="Proton donor" evidence="1">
    <location>
        <position position="194"/>
    </location>
</feature>
<feature type="binding site" evidence="1">
    <location>
        <position position="10"/>
    </location>
    <ligand>
        <name>3-amino-2-oxopropyl phosphate</name>
        <dbReference type="ChEBI" id="CHEBI:57279"/>
    </ligand>
</feature>
<feature type="binding site" evidence="1">
    <location>
        <begin position="12"/>
        <end position="13"/>
    </location>
    <ligand>
        <name>1-deoxy-D-xylulose 5-phosphate</name>
        <dbReference type="ChEBI" id="CHEBI:57792"/>
    </ligand>
</feature>
<feature type="binding site" evidence="1">
    <location>
        <position position="21"/>
    </location>
    <ligand>
        <name>3-amino-2-oxopropyl phosphate</name>
        <dbReference type="ChEBI" id="CHEBI:57279"/>
    </ligand>
</feature>
<feature type="binding site" evidence="1">
    <location>
        <position position="48"/>
    </location>
    <ligand>
        <name>1-deoxy-D-xylulose 5-phosphate</name>
        <dbReference type="ChEBI" id="CHEBI:57792"/>
    </ligand>
</feature>
<feature type="binding site" evidence="1">
    <location>
        <position position="53"/>
    </location>
    <ligand>
        <name>1-deoxy-D-xylulose 5-phosphate</name>
        <dbReference type="ChEBI" id="CHEBI:57792"/>
    </ligand>
</feature>
<feature type="binding site" evidence="1">
    <location>
        <position position="103"/>
    </location>
    <ligand>
        <name>1-deoxy-D-xylulose 5-phosphate</name>
        <dbReference type="ChEBI" id="CHEBI:57792"/>
    </ligand>
</feature>
<feature type="binding site" evidence="1">
    <location>
        <position position="195"/>
    </location>
    <ligand>
        <name>3-amino-2-oxopropyl phosphate</name>
        <dbReference type="ChEBI" id="CHEBI:57279"/>
    </ligand>
</feature>
<feature type="binding site" evidence="1">
    <location>
        <begin position="216"/>
        <end position="217"/>
    </location>
    <ligand>
        <name>3-amino-2-oxopropyl phosphate</name>
        <dbReference type="ChEBI" id="CHEBI:57279"/>
    </ligand>
</feature>
<feature type="site" description="Transition state stabilizer" evidence="1">
    <location>
        <position position="154"/>
    </location>
</feature>
<evidence type="ECO:0000255" key="1">
    <source>
        <dbReference type="HAMAP-Rule" id="MF_00279"/>
    </source>
</evidence>
<dbReference type="EC" id="2.6.99.2" evidence="1"/>
<dbReference type="EMBL" id="CR628337">
    <property type="protein sequence ID" value="CAH15209.1"/>
    <property type="molecule type" value="Genomic_DNA"/>
</dbReference>
<dbReference type="RefSeq" id="WP_011215110.1">
    <property type="nucleotide sequence ID" value="NC_006369.1"/>
</dbReference>
<dbReference type="SMR" id="Q3V7F6"/>
<dbReference type="KEGG" id="lpf:lpl0975"/>
<dbReference type="LegioList" id="lpl0975"/>
<dbReference type="HOGENOM" id="CLU_074563_0_0_6"/>
<dbReference type="UniPathway" id="UPA00244">
    <property type="reaction ID" value="UER00313"/>
</dbReference>
<dbReference type="Proteomes" id="UP000002517">
    <property type="component" value="Chromosome"/>
</dbReference>
<dbReference type="GO" id="GO:0005829">
    <property type="term" value="C:cytosol"/>
    <property type="evidence" value="ECO:0007669"/>
    <property type="project" value="TreeGrafter"/>
</dbReference>
<dbReference type="GO" id="GO:0033856">
    <property type="term" value="F:pyridoxine 5'-phosphate synthase activity"/>
    <property type="evidence" value="ECO:0007669"/>
    <property type="project" value="UniProtKB-EC"/>
</dbReference>
<dbReference type="GO" id="GO:0008615">
    <property type="term" value="P:pyridoxine biosynthetic process"/>
    <property type="evidence" value="ECO:0007669"/>
    <property type="project" value="UniProtKB-UniRule"/>
</dbReference>
<dbReference type="CDD" id="cd00003">
    <property type="entry name" value="PNPsynthase"/>
    <property type="match status" value="1"/>
</dbReference>
<dbReference type="FunFam" id="3.20.20.70:FF:000042">
    <property type="entry name" value="Pyridoxine 5'-phosphate synthase"/>
    <property type="match status" value="1"/>
</dbReference>
<dbReference type="Gene3D" id="3.20.20.70">
    <property type="entry name" value="Aldolase class I"/>
    <property type="match status" value="1"/>
</dbReference>
<dbReference type="HAMAP" id="MF_00279">
    <property type="entry name" value="PdxJ"/>
    <property type="match status" value="1"/>
</dbReference>
<dbReference type="InterPro" id="IPR013785">
    <property type="entry name" value="Aldolase_TIM"/>
</dbReference>
<dbReference type="InterPro" id="IPR004569">
    <property type="entry name" value="PyrdxlP_synth_PdxJ"/>
</dbReference>
<dbReference type="InterPro" id="IPR036130">
    <property type="entry name" value="Pyridoxine-5'_phos_synth"/>
</dbReference>
<dbReference type="NCBIfam" id="TIGR00559">
    <property type="entry name" value="pdxJ"/>
    <property type="match status" value="1"/>
</dbReference>
<dbReference type="NCBIfam" id="NF003623">
    <property type="entry name" value="PRK05265.1-1"/>
    <property type="match status" value="1"/>
</dbReference>
<dbReference type="NCBIfam" id="NF003625">
    <property type="entry name" value="PRK05265.1-3"/>
    <property type="match status" value="1"/>
</dbReference>
<dbReference type="NCBIfam" id="NF003627">
    <property type="entry name" value="PRK05265.1-5"/>
    <property type="match status" value="1"/>
</dbReference>
<dbReference type="PANTHER" id="PTHR30456">
    <property type="entry name" value="PYRIDOXINE 5'-PHOSPHATE SYNTHASE"/>
    <property type="match status" value="1"/>
</dbReference>
<dbReference type="PANTHER" id="PTHR30456:SF0">
    <property type="entry name" value="PYRIDOXINE 5'-PHOSPHATE SYNTHASE"/>
    <property type="match status" value="1"/>
</dbReference>
<dbReference type="Pfam" id="PF03740">
    <property type="entry name" value="PdxJ"/>
    <property type="match status" value="1"/>
</dbReference>
<dbReference type="SUPFAM" id="SSF63892">
    <property type="entry name" value="Pyridoxine 5'-phosphate synthase"/>
    <property type="match status" value="1"/>
</dbReference>
<name>PDXJ_LEGPL</name>
<proteinExistence type="inferred from homology"/>
<keyword id="KW-0963">Cytoplasm</keyword>
<keyword id="KW-0664">Pyridoxine biosynthesis</keyword>
<keyword id="KW-0808">Transferase</keyword>
<sequence>MNKELLLGVNIDHIATIRQARGTRYPDPVQAAMDAEEAGADGITLHMREDLRHIQARDVRLIKQVLQTRMNLELAVTEAMLDFAEEISPEHSCLVPEKREELTTEGGLDILTHRNVVEKAVRRLQLMGSEVSLFIDPDKEQIRAAVDVGAPVIELHTGCYADATSEEKQHYELQRIKEAAEFAASLNLVVNAGHGLHYHNVKPIAAIRELNELNIGHAIIARALFCGLKEAVRHMRQLMQEARLYVND</sequence>